<gene>
    <name evidence="1" type="primary">RIR2</name>
    <name type="ORF">ORF18</name>
</gene>
<organismHost>
    <name type="scientific">Homo sapiens</name>
    <name type="common">Human</name>
    <dbReference type="NCBI Taxonomy" id="9606"/>
</organismHost>
<accession>Q4JQV7</accession>
<dbReference type="EC" id="1.17.4.1" evidence="1"/>
<dbReference type="EMBL" id="AB097932">
    <property type="status" value="NOT_ANNOTATED_CDS"/>
    <property type="molecule type" value="Genomic_DNA"/>
</dbReference>
<dbReference type="EMBL" id="AB097933">
    <property type="status" value="NOT_ANNOTATED_CDS"/>
    <property type="molecule type" value="Genomic_DNA"/>
</dbReference>
<dbReference type="EMBL" id="DQ008354">
    <property type="protein sequence ID" value="AAY57634.1"/>
    <property type="molecule type" value="Genomic_DNA"/>
</dbReference>
<dbReference type="EMBL" id="DQ008355">
    <property type="protein sequence ID" value="AAY57705.1"/>
    <property type="molecule type" value="Genomic_DNA"/>
</dbReference>
<dbReference type="RefSeq" id="NP_040141.1">
    <property type="nucleotide sequence ID" value="NC_001348.1"/>
</dbReference>
<dbReference type="SMR" id="Q4JQV7"/>
<dbReference type="IntAct" id="Q4JQV7">
    <property type="interactions" value="22"/>
</dbReference>
<dbReference type="GeneID" id="1487715"/>
<dbReference type="KEGG" id="vg:1487715"/>
<dbReference type="Proteomes" id="UP000002603">
    <property type="component" value="Genome"/>
</dbReference>
<dbReference type="Proteomes" id="UP000008504">
    <property type="component" value="Genome"/>
</dbReference>
<dbReference type="Proteomes" id="UP000008505">
    <property type="component" value="Genome"/>
</dbReference>
<dbReference type="Proteomes" id="UP000008506">
    <property type="component" value="Genome"/>
</dbReference>
<dbReference type="GO" id="GO:0033644">
    <property type="term" value="C:host cell membrane"/>
    <property type="evidence" value="ECO:0007669"/>
    <property type="project" value="UniProtKB-SubCell"/>
</dbReference>
<dbReference type="GO" id="GO:0016020">
    <property type="term" value="C:membrane"/>
    <property type="evidence" value="ECO:0007669"/>
    <property type="project" value="UniProtKB-KW"/>
</dbReference>
<dbReference type="GO" id="GO:0046872">
    <property type="term" value="F:metal ion binding"/>
    <property type="evidence" value="ECO:0007669"/>
    <property type="project" value="UniProtKB-KW"/>
</dbReference>
<dbReference type="GO" id="GO:0004748">
    <property type="term" value="F:ribonucleoside-diphosphate reductase activity, thioredoxin disulfide as acceptor"/>
    <property type="evidence" value="ECO:0007669"/>
    <property type="project" value="UniProtKB-EC"/>
</dbReference>
<dbReference type="GO" id="GO:0009263">
    <property type="term" value="P:deoxyribonucleotide biosynthetic process"/>
    <property type="evidence" value="ECO:0007669"/>
    <property type="project" value="InterPro"/>
</dbReference>
<dbReference type="GO" id="GO:0006260">
    <property type="term" value="P:DNA replication"/>
    <property type="evidence" value="ECO:0007669"/>
    <property type="project" value="UniProtKB-KW"/>
</dbReference>
<dbReference type="GO" id="GO:0019046">
    <property type="term" value="P:release from viral latency"/>
    <property type="evidence" value="ECO:0007669"/>
    <property type="project" value="UniProtKB-KW"/>
</dbReference>
<dbReference type="CDD" id="cd01049">
    <property type="entry name" value="RNRR2"/>
    <property type="match status" value="1"/>
</dbReference>
<dbReference type="Gene3D" id="1.10.620.20">
    <property type="entry name" value="Ribonucleotide Reductase, subunit A"/>
    <property type="match status" value="1"/>
</dbReference>
<dbReference type="HAMAP" id="MF_04028">
    <property type="entry name" value="HSV_RIR2"/>
    <property type="match status" value="1"/>
</dbReference>
<dbReference type="InterPro" id="IPR009078">
    <property type="entry name" value="Ferritin-like_SF"/>
</dbReference>
<dbReference type="InterPro" id="IPR034715">
    <property type="entry name" value="HSV_RIR2"/>
</dbReference>
<dbReference type="InterPro" id="IPR012348">
    <property type="entry name" value="RNR-like"/>
</dbReference>
<dbReference type="InterPro" id="IPR033909">
    <property type="entry name" value="RNR_small"/>
</dbReference>
<dbReference type="InterPro" id="IPR030475">
    <property type="entry name" value="RNR_small_AS"/>
</dbReference>
<dbReference type="InterPro" id="IPR000358">
    <property type="entry name" value="RNR_small_fam"/>
</dbReference>
<dbReference type="PANTHER" id="PTHR23409">
    <property type="entry name" value="RIBONUCLEOSIDE-DIPHOSPHATE REDUCTASE SMALL CHAIN"/>
    <property type="match status" value="1"/>
</dbReference>
<dbReference type="PANTHER" id="PTHR23409:SF18">
    <property type="entry name" value="RIBONUCLEOSIDE-DIPHOSPHATE REDUCTASE SUBUNIT M2"/>
    <property type="match status" value="1"/>
</dbReference>
<dbReference type="Pfam" id="PF00268">
    <property type="entry name" value="Ribonuc_red_sm"/>
    <property type="match status" value="1"/>
</dbReference>
<dbReference type="SUPFAM" id="SSF47240">
    <property type="entry name" value="Ferritin-like"/>
    <property type="match status" value="1"/>
</dbReference>
<dbReference type="PROSITE" id="PS00368">
    <property type="entry name" value="RIBORED_SMALL"/>
    <property type="match status" value="1"/>
</dbReference>
<keyword id="KW-0235">DNA replication</keyword>
<keyword id="KW-1043">Host membrane</keyword>
<keyword id="KW-0408">Iron</keyword>
<keyword id="KW-0472">Membrane</keyword>
<keyword id="KW-0479">Metal-binding</keyword>
<keyword id="KW-0560">Oxidoreductase</keyword>
<keyword id="KW-0812">Transmembrane</keyword>
<keyword id="KW-1133">Transmembrane helix</keyword>
<keyword id="KW-1251">Viral latency</keyword>
<keyword id="KW-1272">Viral reactivation from latency</keyword>
<sequence>MDQKDCSHFFYRPECPDINNLRALSISNRWLESDFIIEDDYQYLDCLTEDELIFYRFIFTFLSAADDLVNVNLGSLTQLFSQKDIHHYYIEQECIEVVHARVYSQIQLMLFRGDESLRVQYVNVTINNPSIQQKVQWLEEKVRDNPSVAEKYILMILIEGIFFVSSFAAIAYLRNNGLFVVTCQFNDLISRDEAIHTSASCCIYNNYVPEKPAITRIHQLFSEAVEIECAFLKSHAPKTRLVNVDAITQYVKFSADRLLSAINVPKLFNTPPPDSDFPLAFMIADKNTNFFERHSTSYAGTVINDL</sequence>
<evidence type="ECO:0000255" key="1">
    <source>
        <dbReference type="HAMAP-Rule" id="MF_04028"/>
    </source>
</evidence>
<feature type="chain" id="PRO_0000385164" description="Ribonucleoside-diphosphate reductase small subunit">
    <location>
        <begin position="1"/>
        <end position="306"/>
    </location>
</feature>
<feature type="transmembrane region" description="Helical" evidence="1">
    <location>
        <begin position="153"/>
        <end position="173"/>
    </location>
</feature>
<feature type="active site" evidence="1">
    <location>
        <position position="103"/>
    </location>
</feature>
<feature type="binding site" evidence="1">
    <location>
        <position position="66"/>
    </location>
    <ligand>
        <name>Fe cation</name>
        <dbReference type="ChEBI" id="CHEBI:24875"/>
        <label>1</label>
    </ligand>
</feature>
<feature type="binding site" evidence="1">
    <location>
        <position position="96"/>
    </location>
    <ligand>
        <name>Fe cation</name>
        <dbReference type="ChEBI" id="CHEBI:24875"/>
        <label>1</label>
    </ligand>
</feature>
<feature type="binding site" evidence="1">
    <location>
        <position position="96"/>
    </location>
    <ligand>
        <name>Fe cation</name>
        <dbReference type="ChEBI" id="CHEBI:24875"/>
        <label>2</label>
    </ligand>
</feature>
<feature type="binding site" evidence="1">
    <location>
        <position position="99"/>
    </location>
    <ligand>
        <name>Fe cation</name>
        <dbReference type="ChEBI" id="CHEBI:24875"/>
        <label>1</label>
    </ligand>
</feature>
<feature type="binding site" evidence="1">
    <location>
        <position position="159"/>
    </location>
    <ligand>
        <name>Fe cation</name>
        <dbReference type="ChEBI" id="CHEBI:24875"/>
        <label>2</label>
    </ligand>
</feature>
<feature type="binding site" evidence="1">
    <location>
        <position position="193"/>
    </location>
    <ligand>
        <name>Fe cation</name>
        <dbReference type="ChEBI" id="CHEBI:24875"/>
        <label>2</label>
    </ligand>
</feature>
<feature type="binding site" evidence="1">
    <location>
        <position position="196"/>
    </location>
    <ligand>
        <name>Fe cation</name>
        <dbReference type="ChEBI" id="CHEBI:24875"/>
        <label>2</label>
    </ligand>
</feature>
<comment type="function">
    <text evidence="1">Ribonucleoside-diphosphate reductase holoenzyme provides the precursors necessary for viral DNA synthesis. Allows virus growth in non-dividing cells, as well as reactivation from latency in infected hosts. Catalyzes the biosynthesis of deoxyribonucleotides from the corresponding ribonucleotides.</text>
</comment>
<comment type="catalytic activity">
    <reaction evidence="1">
        <text>a 2'-deoxyribonucleoside 5'-diphosphate + [thioredoxin]-disulfide + H2O = a ribonucleoside 5'-diphosphate + [thioredoxin]-dithiol</text>
        <dbReference type="Rhea" id="RHEA:23252"/>
        <dbReference type="Rhea" id="RHEA-COMP:10698"/>
        <dbReference type="Rhea" id="RHEA-COMP:10700"/>
        <dbReference type="ChEBI" id="CHEBI:15377"/>
        <dbReference type="ChEBI" id="CHEBI:29950"/>
        <dbReference type="ChEBI" id="CHEBI:50058"/>
        <dbReference type="ChEBI" id="CHEBI:57930"/>
        <dbReference type="ChEBI" id="CHEBI:73316"/>
        <dbReference type="EC" id="1.17.4.1"/>
    </reaction>
</comment>
<comment type="cofactor">
    <cofactor evidence="1">
        <name>Fe cation</name>
        <dbReference type="ChEBI" id="CHEBI:24875"/>
    </cofactor>
</comment>
<comment type="subunit">
    <text evidence="1">Heterotetramer composed of a homodimer of the large subunit (R1) and a homodimer of the small subunit (R2). Larger multisubunit protein complex are also active, composed of (R1)n(R2)n.</text>
</comment>
<comment type="interaction">
    <interactant intactId="EBI-2532450">
        <id>Q4JQV7</id>
    </interactant>
    <interactant intactId="EBI-2532547">
        <id>Q4JQV2</id>
        <label>ORF23</label>
    </interactant>
    <organismsDiffer>false</organismsDiffer>
    <experiments>3</experiments>
</comment>
<comment type="interaction">
    <interactant intactId="EBI-2532450">
        <id>Q4JQV7</id>
    </interactant>
    <interactant intactId="EBI-2532467">
        <id>Q4JQU9</id>
        <label>ORF26</label>
    </interactant>
    <organismsDiffer>false</organismsDiffer>
    <experiments>3</experiments>
</comment>
<comment type="subcellular location">
    <subcellularLocation>
        <location evidence="1">Host membrane</location>
        <topology evidence="1">Single-pass membrane protein</topology>
    </subcellularLocation>
</comment>
<comment type="similarity">
    <text evidence="1">Belongs to the ribonucleoside diphosphate reductase small chain family.</text>
</comment>
<protein>
    <recommendedName>
        <fullName evidence="1">Ribonucleoside-diphosphate reductase small subunit</fullName>
        <ecNumber evidence="1">1.17.4.1</ecNumber>
    </recommendedName>
    <alternativeName>
        <fullName evidence="1">Ribonucleotide reductase small subunit</fullName>
    </alternativeName>
</protein>
<name>RIR2_VZVO</name>
<proteinExistence type="evidence at protein level"/>
<organism>
    <name type="scientific">Varicella-zoster virus (strain Oka vaccine)</name>
    <name type="common">HHV-3</name>
    <name type="synonym">Human herpesvirus 3</name>
    <dbReference type="NCBI Taxonomy" id="341980"/>
    <lineage>
        <taxon>Viruses</taxon>
        <taxon>Duplodnaviria</taxon>
        <taxon>Heunggongvirae</taxon>
        <taxon>Peploviricota</taxon>
        <taxon>Herviviricetes</taxon>
        <taxon>Herpesvirales</taxon>
        <taxon>Orthoherpesviridae</taxon>
        <taxon>Alphaherpesvirinae</taxon>
        <taxon>Varicellovirus</taxon>
        <taxon>Varicellovirus humanalpha3</taxon>
        <taxon>Human herpesvirus 3</taxon>
    </lineage>
</organism>
<reference key="1">
    <citation type="journal article" date="2002" name="J. Virol.">
        <title>Comparison of the complete DNA sequences of the Oka varicella vaccine and its parental virus.</title>
        <authorList>
            <person name="Gomi Y."/>
            <person name="Sunamachi H."/>
            <person name="Mori Y."/>
            <person name="Nagaike K."/>
            <person name="Takahashi M."/>
            <person name="Yamanishi K."/>
        </authorList>
    </citation>
    <scope>NUCLEOTIDE SEQUENCE [LARGE SCALE GENOMIC DNA]</scope>
    <source>
        <strain>Isolate Human/Japan/P-Oka/1970</strain>
        <strain>Oka varicella vaccine Biken (V-Oka-Biken)</strain>
    </source>
</reference>
<reference key="2">
    <citation type="journal article" date="2008" name="J. Virol.">
        <title>Complete DNA sequences of two oka strain varicella-zoster virus genomes.</title>
        <authorList>
            <person name="Tillieux S.L."/>
            <person name="Halsey W.S."/>
            <person name="Thomas E.S."/>
            <person name="Voycik J.J."/>
            <person name="Sathe G.M."/>
            <person name="Vassilev V."/>
        </authorList>
    </citation>
    <scope>NUCLEOTIDE SEQUENCE [LARGE SCALE GENOMIC DNA]</scope>
    <source>
        <strain>Oka varicella vaccine VarilRix (V-Oka-GSK)</strain>
        <strain>Oka varicella vaccine Varivax (V-Oka-Merck)</strain>
    </source>
</reference>
<reference key="3">
    <citation type="journal article" date="2009" name="Trends Biochem. Sci.">
        <title>Tinkering with a viral ribonucleotide reductase.</title>
        <authorList>
            <person name="Lembo D."/>
            <person name="Brune W."/>
        </authorList>
    </citation>
    <scope>REVIEW</scope>
</reference>